<dbReference type="EMBL" id="BC095356">
    <property type="protein sequence ID" value="AAH95356.1"/>
    <property type="molecule type" value="mRNA"/>
</dbReference>
<dbReference type="RefSeq" id="NP_001018163.1">
    <property type="nucleotide sequence ID" value="NM_001018153.1"/>
</dbReference>
<dbReference type="SMR" id="Q503E9"/>
<dbReference type="FunCoup" id="Q503E9">
    <property type="interactions" value="1400"/>
</dbReference>
<dbReference type="STRING" id="7955.ENSDARP00000092803"/>
<dbReference type="PaxDb" id="7955-ENSDARP00000092803"/>
<dbReference type="Ensembl" id="ENSDART00000102027">
    <property type="protein sequence ID" value="ENSDARP00000092803"/>
    <property type="gene ID" value="ENSDARG00000042030"/>
</dbReference>
<dbReference type="GeneID" id="553205"/>
<dbReference type="KEGG" id="dre:553205"/>
<dbReference type="AGR" id="ZFIN:ZDB-GENE-050522-22"/>
<dbReference type="CTD" id="3841"/>
<dbReference type="ZFIN" id="ZDB-GENE-050522-22">
    <property type="gene designation" value="kpna5"/>
</dbReference>
<dbReference type="eggNOG" id="KOG0166">
    <property type="taxonomic scope" value="Eukaryota"/>
</dbReference>
<dbReference type="InParanoid" id="Q503E9"/>
<dbReference type="OMA" id="NWSTISV"/>
<dbReference type="OrthoDB" id="29145at2759"/>
<dbReference type="PhylomeDB" id="Q503E9"/>
<dbReference type="TreeFam" id="TF354205"/>
<dbReference type="PRO" id="PR:Q503E9"/>
<dbReference type="Proteomes" id="UP000000437">
    <property type="component" value="Chromosome 16"/>
</dbReference>
<dbReference type="GO" id="GO:0005737">
    <property type="term" value="C:cytoplasm"/>
    <property type="evidence" value="ECO:0007669"/>
    <property type="project" value="UniProtKB-SubCell"/>
</dbReference>
<dbReference type="GO" id="GO:0005654">
    <property type="term" value="C:nucleoplasm"/>
    <property type="evidence" value="ECO:0000318"/>
    <property type="project" value="GO_Central"/>
</dbReference>
<dbReference type="GO" id="GO:0005634">
    <property type="term" value="C:nucleus"/>
    <property type="evidence" value="ECO:0000318"/>
    <property type="project" value="GO_Central"/>
</dbReference>
<dbReference type="GO" id="GO:0061608">
    <property type="term" value="F:nuclear import signal receptor activity"/>
    <property type="evidence" value="ECO:0000318"/>
    <property type="project" value="GO_Central"/>
</dbReference>
<dbReference type="GO" id="GO:0008139">
    <property type="term" value="F:nuclear localization sequence binding"/>
    <property type="evidence" value="ECO:0000318"/>
    <property type="project" value="GO_Central"/>
</dbReference>
<dbReference type="GO" id="GO:0048513">
    <property type="term" value="P:animal organ development"/>
    <property type="evidence" value="ECO:0007669"/>
    <property type="project" value="UniProtKB-ARBA"/>
</dbReference>
<dbReference type="GO" id="GO:0006607">
    <property type="term" value="P:NLS-bearing protein import into nucleus"/>
    <property type="evidence" value="ECO:0000318"/>
    <property type="project" value="GO_Central"/>
</dbReference>
<dbReference type="FunFam" id="1.20.5.690:FF:000001">
    <property type="entry name" value="Importin subunit alpha"/>
    <property type="match status" value="1"/>
</dbReference>
<dbReference type="FunFam" id="1.25.10.10:FF:000013">
    <property type="entry name" value="Importin subunit alpha"/>
    <property type="match status" value="1"/>
</dbReference>
<dbReference type="Gene3D" id="1.20.5.690">
    <property type="entry name" value="Importin-alpha, importin-beta-binding domain"/>
    <property type="match status" value="1"/>
</dbReference>
<dbReference type="Gene3D" id="1.25.10.10">
    <property type="entry name" value="Leucine-rich Repeat Variant"/>
    <property type="match status" value="1"/>
</dbReference>
<dbReference type="InterPro" id="IPR011989">
    <property type="entry name" value="ARM-like"/>
</dbReference>
<dbReference type="InterPro" id="IPR016024">
    <property type="entry name" value="ARM-type_fold"/>
</dbReference>
<dbReference type="InterPro" id="IPR032413">
    <property type="entry name" value="Arm_3"/>
</dbReference>
<dbReference type="InterPro" id="IPR000225">
    <property type="entry name" value="Armadillo"/>
</dbReference>
<dbReference type="InterPro" id="IPR002652">
    <property type="entry name" value="Importin-a_IBB"/>
</dbReference>
<dbReference type="InterPro" id="IPR036975">
    <property type="entry name" value="Importin-a_IBB_sf"/>
</dbReference>
<dbReference type="InterPro" id="IPR024931">
    <property type="entry name" value="Importin_alpha"/>
</dbReference>
<dbReference type="PANTHER" id="PTHR23316">
    <property type="entry name" value="IMPORTIN ALPHA"/>
    <property type="match status" value="1"/>
</dbReference>
<dbReference type="Pfam" id="PF00514">
    <property type="entry name" value="Arm"/>
    <property type="match status" value="8"/>
</dbReference>
<dbReference type="Pfam" id="PF16186">
    <property type="entry name" value="Arm_3"/>
    <property type="match status" value="1"/>
</dbReference>
<dbReference type="Pfam" id="PF01749">
    <property type="entry name" value="IBB"/>
    <property type="match status" value="1"/>
</dbReference>
<dbReference type="PIRSF" id="PIRSF005673">
    <property type="entry name" value="Importin_alpha"/>
    <property type="match status" value="1"/>
</dbReference>
<dbReference type="SMART" id="SM00185">
    <property type="entry name" value="ARM"/>
    <property type="match status" value="8"/>
</dbReference>
<dbReference type="SUPFAM" id="SSF48371">
    <property type="entry name" value="ARM repeat"/>
    <property type="match status" value="1"/>
</dbReference>
<dbReference type="PROSITE" id="PS50176">
    <property type="entry name" value="ARM_REPEAT"/>
    <property type="match status" value="3"/>
</dbReference>
<dbReference type="PROSITE" id="PS51214">
    <property type="entry name" value="IBB"/>
    <property type="match status" value="1"/>
</dbReference>
<keyword id="KW-0963">Cytoplasm</keyword>
<keyword id="KW-0653">Protein transport</keyword>
<keyword id="KW-1185">Reference proteome</keyword>
<keyword id="KW-0677">Repeat</keyword>
<keyword id="KW-0813">Transport</keyword>
<reference key="1">
    <citation type="submission" date="2005-05" db="EMBL/GenBank/DDBJ databases">
        <authorList>
            <consortium name="NIH - Zebrafish Gene Collection (ZGC) project"/>
        </authorList>
    </citation>
    <scope>NUCLEOTIDE SEQUENCE [LARGE SCALE MRNA]</scope>
    <source>
        <strain>Singapore local strain</strain>
        <tissue>Embryo</tissue>
    </source>
</reference>
<gene>
    <name evidence="2" type="primary">kpna5</name>
    <name type="ORF">zgc:110662</name>
</gene>
<proteinExistence type="evidence at transcript level"/>
<sequence length="539" mass="60109">MDAMASPGKDNYRMKSYKNKALNPQEMRRRREEEGIQLRKQKREEQLFKRRNVSLPPGDESMLECPIQDPDVSSTVPVSGEGVITQDVIQMIFSEDPDQQLIATQKFRKLLSKEPNPPIDEVIGTPGVVNRFVEFLRRSDNCTLQFEAAWALTNIASGTFQHTKVVIETGAVPIFIELLNSEYEDVQEQAVWALGNIAGDNAECRDYVLNCGILPSLQQLLAKSNRLTTTRNAVWALSNLCRGKNPPPDFAKVSPCLSVLSRLLFSSDPDVLADACWALSYLSDGPNDKIQTVIDSGVCRRLVELLMHSDYKVVSPALRAVGNIVTGDDIQTQVILNCSALPCLLHLLSSPKESIKKEACWTVSNITAGNRAQIQAVIDSNVFPVLIEILQKAEFRTRKEAAWAITNATSGGTPEQIRYLVSLNTIKPMCDLLTVMDSKIVQVALNGLENILRLGEQESKQNGTGINPYCALIEEAYGLDKIEFLQSHENQEIYQKAFDLIEHYFGVEEEDASIVPQVDQNQGQYIFQQSEGPMEGFQL</sequence>
<name>IMA6_DANRE</name>
<organism>
    <name type="scientific">Danio rerio</name>
    <name type="common">Zebrafish</name>
    <name type="synonym">Brachydanio rerio</name>
    <dbReference type="NCBI Taxonomy" id="7955"/>
    <lineage>
        <taxon>Eukaryota</taxon>
        <taxon>Metazoa</taxon>
        <taxon>Chordata</taxon>
        <taxon>Craniata</taxon>
        <taxon>Vertebrata</taxon>
        <taxon>Euteleostomi</taxon>
        <taxon>Actinopterygii</taxon>
        <taxon>Neopterygii</taxon>
        <taxon>Teleostei</taxon>
        <taxon>Ostariophysi</taxon>
        <taxon>Cypriniformes</taxon>
        <taxon>Danionidae</taxon>
        <taxon>Danioninae</taxon>
        <taxon>Danio</taxon>
    </lineage>
</organism>
<feature type="chain" id="PRO_0000376935" description="Importin subunit alpha-6">
    <location>
        <begin position="1"/>
        <end position="539"/>
    </location>
</feature>
<feature type="domain" description="IBB" evidence="4">
    <location>
        <begin position="1"/>
        <end position="60"/>
    </location>
</feature>
<feature type="repeat" description="ARM 1" evidence="3">
    <location>
        <begin position="117"/>
        <end position="157"/>
    </location>
</feature>
<feature type="repeat" description="ARM 2" evidence="3">
    <location>
        <begin position="160"/>
        <end position="199"/>
    </location>
</feature>
<feature type="repeat" description="ARM 3" evidence="3">
    <location>
        <begin position="202"/>
        <end position="242"/>
    </location>
</feature>
<feature type="repeat" description="ARM 4" evidence="3">
    <location>
        <begin position="245"/>
        <end position="284"/>
    </location>
</feature>
<feature type="repeat" description="ARM 5" evidence="3">
    <location>
        <begin position="287"/>
        <end position="326"/>
    </location>
</feature>
<feature type="repeat" description="ARM 6" evidence="3">
    <location>
        <begin position="329"/>
        <end position="368"/>
    </location>
</feature>
<feature type="repeat" description="ARM 7" evidence="3">
    <location>
        <begin position="371"/>
        <end position="410"/>
    </location>
</feature>
<feature type="repeat" description="ARM 8" evidence="3">
    <location>
        <begin position="414"/>
        <end position="453"/>
    </location>
</feature>
<feature type="region of interest" description="Disordered" evidence="5">
    <location>
        <begin position="1"/>
        <end position="41"/>
    </location>
</feature>
<feature type="compositionally biased region" description="Basic and acidic residues" evidence="5">
    <location>
        <begin position="26"/>
        <end position="41"/>
    </location>
</feature>
<comment type="function">
    <text evidence="1">Functions in nuclear protein import.</text>
</comment>
<comment type="subcellular location">
    <subcellularLocation>
        <location evidence="1">Cytoplasm</location>
    </subcellularLocation>
</comment>
<comment type="similarity">
    <text evidence="6">Belongs to the importin alpha family.</text>
</comment>
<accession>Q503E9</accession>
<evidence type="ECO:0000250" key="1"/>
<evidence type="ECO:0000250" key="2">
    <source>
        <dbReference type="UniProtKB" id="O15131"/>
    </source>
</evidence>
<evidence type="ECO:0000255" key="3"/>
<evidence type="ECO:0000255" key="4">
    <source>
        <dbReference type="PROSITE-ProRule" id="PRU00561"/>
    </source>
</evidence>
<evidence type="ECO:0000256" key="5">
    <source>
        <dbReference type="SAM" id="MobiDB-lite"/>
    </source>
</evidence>
<evidence type="ECO:0000305" key="6"/>
<protein>
    <recommendedName>
        <fullName evidence="2">Importin subunit alpha-6</fullName>
    </recommendedName>
    <alternativeName>
        <fullName>Karyopherin subunit alpha-5</fullName>
    </alternativeName>
</protein>